<organism>
    <name type="scientific">Sparus aurata</name>
    <name type="common">Gilthead sea bream</name>
    <dbReference type="NCBI Taxonomy" id="8175"/>
    <lineage>
        <taxon>Eukaryota</taxon>
        <taxon>Metazoa</taxon>
        <taxon>Chordata</taxon>
        <taxon>Craniata</taxon>
        <taxon>Vertebrata</taxon>
        <taxon>Euteleostomi</taxon>
        <taxon>Actinopterygii</taxon>
        <taxon>Neopterygii</taxon>
        <taxon>Teleostei</taxon>
        <taxon>Neoteleostei</taxon>
        <taxon>Acanthomorphata</taxon>
        <taxon>Eupercaria</taxon>
        <taxon>Spariformes</taxon>
        <taxon>Sparidae</taxon>
        <taxon>Sparus</taxon>
    </lineage>
</organism>
<accession>P79896</accession>
<name>ADHX_SPAAU</name>
<evidence type="ECO:0000250" key="1">
    <source>
        <dbReference type="UniProtKB" id="P11766"/>
    </source>
</evidence>
<evidence type="ECO:0000250" key="2">
    <source>
        <dbReference type="UniProtKB" id="P28474"/>
    </source>
</evidence>
<evidence type="ECO:0000269" key="3">
    <source>
    </source>
</evidence>
<evidence type="ECO:0000305" key="4"/>
<dbReference type="EC" id="1.1.1.1" evidence="1"/>
<dbReference type="EC" id="1.1.1.-"/>
<dbReference type="EC" id="1.1.1.284" evidence="1"/>
<dbReference type="EMBL" id="U84791">
    <property type="protein sequence ID" value="AAB41888.1"/>
    <property type="molecule type" value="mRNA"/>
</dbReference>
<dbReference type="PIR" id="JC4967">
    <property type="entry name" value="JC4967"/>
</dbReference>
<dbReference type="RefSeq" id="XP_030252778.1">
    <property type="nucleotide sequence ID" value="XM_030396918.1"/>
</dbReference>
<dbReference type="SMR" id="P79896"/>
<dbReference type="FunCoup" id="P79896">
    <property type="interactions" value="1650"/>
</dbReference>
<dbReference type="GeneID" id="115569043"/>
<dbReference type="InParanoid" id="P79896"/>
<dbReference type="OrthoDB" id="417550at2759"/>
<dbReference type="Proteomes" id="UP000472265">
    <property type="component" value="Unplaced"/>
</dbReference>
<dbReference type="GO" id="GO:0005829">
    <property type="term" value="C:cytosol"/>
    <property type="evidence" value="ECO:0007669"/>
    <property type="project" value="TreeGrafter"/>
</dbReference>
<dbReference type="GO" id="GO:0004022">
    <property type="term" value="F:alcohol dehydrogenase (NAD+) activity"/>
    <property type="evidence" value="ECO:0007669"/>
    <property type="project" value="UniProtKB-EC"/>
</dbReference>
<dbReference type="GO" id="GO:0106322">
    <property type="term" value="F:S-(hydroxymethyl)glutathione dehydrogenase (NAD+) activity"/>
    <property type="evidence" value="ECO:0007669"/>
    <property type="project" value="RHEA"/>
</dbReference>
<dbReference type="GO" id="GO:0106321">
    <property type="term" value="F:S-(hydroxymethyl)glutathione dehydrogenase (NADP+) activity"/>
    <property type="evidence" value="ECO:0007669"/>
    <property type="project" value="RHEA"/>
</dbReference>
<dbReference type="GO" id="GO:0080007">
    <property type="term" value="F:S-nitrosoglutathione reductase (NADH) activity"/>
    <property type="evidence" value="ECO:0007669"/>
    <property type="project" value="RHEA"/>
</dbReference>
<dbReference type="GO" id="GO:0008270">
    <property type="term" value="F:zinc ion binding"/>
    <property type="evidence" value="ECO:0007669"/>
    <property type="project" value="InterPro"/>
</dbReference>
<dbReference type="GO" id="GO:0046294">
    <property type="term" value="P:formaldehyde catabolic process"/>
    <property type="evidence" value="ECO:0007669"/>
    <property type="project" value="InterPro"/>
</dbReference>
<dbReference type="CDD" id="cd08300">
    <property type="entry name" value="alcohol_DH_class_III"/>
    <property type="match status" value="1"/>
</dbReference>
<dbReference type="FunFam" id="3.40.50.720:FF:000003">
    <property type="entry name" value="S-(hydroxymethyl)glutathione dehydrogenase"/>
    <property type="match status" value="1"/>
</dbReference>
<dbReference type="FunFam" id="3.90.180.10:FF:000001">
    <property type="entry name" value="S-(hydroxymethyl)glutathione dehydrogenase"/>
    <property type="match status" value="1"/>
</dbReference>
<dbReference type="Gene3D" id="3.90.180.10">
    <property type="entry name" value="Medium-chain alcohol dehydrogenases, catalytic domain"/>
    <property type="match status" value="1"/>
</dbReference>
<dbReference type="Gene3D" id="3.40.50.720">
    <property type="entry name" value="NAD(P)-binding Rossmann-like Domain"/>
    <property type="match status" value="1"/>
</dbReference>
<dbReference type="InterPro" id="IPR013149">
    <property type="entry name" value="ADH-like_C"/>
</dbReference>
<dbReference type="InterPro" id="IPR013154">
    <property type="entry name" value="ADH-like_N"/>
</dbReference>
<dbReference type="InterPro" id="IPR014183">
    <property type="entry name" value="ADH_3"/>
</dbReference>
<dbReference type="InterPro" id="IPR002328">
    <property type="entry name" value="ADH_Zn_CS"/>
</dbReference>
<dbReference type="InterPro" id="IPR011032">
    <property type="entry name" value="GroES-like_sf"/>
</dbReference>
<dbReference type="InterPro" id="IPR036291">
    <property type="entry name" value="NAD(P)-bd_dom_sf"/>
</dbReference>
<dbReference type="NCBIfam" id="TIGR02818">
    <property type="entry name" value="adh_III_F_hyde"/>
    <property type="match status" value="1"/>
</dbReference>
<dbReference type="PANTHER" id="PTHR43880">
    <property type="entry name" value="ALCOHOL DEHYDROGENASE"/>
    <property type="match status" value="1"/>
</dbReference>
<dbReference type="PANTHER" id="PTHR43880:SF21">
    <property type="entry name" value="S-(HYDROXYMETHYL)GLUTATHIONE DEHYDROGENASE"/>
    <property type="match status" value="1"/>
</dbReference>
<dbReference type="Pfam" id="PF08240">
    <property type="entry name" value="ADH_N"/>
    <property type="match status" value="1"/>
</dbReference>
<dbReference type="Pfam" id="PF00107">
    <property type="entry name" value="ADH_zinc_N"/>
    <property type="match status" value="1"/>
</dbReference>
<dbReference type="SUPFAM" id="SSF50129">
    <property type="entry name" value="GroES-like"/>
    <property type="match status" value="2"/>
</dbReference>
<dbReference type="SUPFAM" id="SSF51735">
    <property type="entry name" value="NAD(P)-binding Rossmann-fold domains"/>
    <property type="match status" value="1"/>
</dbReference>
<dbReference type="PROSITE" id="PS00059">
    <property type="entry name" value="ADH_ZINC"/>
    <property type="match status" value="1"/>
</dbReference>
<protein>
    <recommendedName>
        <fullName>Alcohol dehydrogenase class-3</fullName>
        <ecNumber evidence="1">1.1.1.1</ecNumber>
    </recommendedName>
    <alternativeName>
        <fullName>Alcohol dehydrogenase class-III</fullName>
    </alternativeName>
    <alternativeName>
        <fullName>Glutathione-dependent formaldehyde dehydrogenase</fullName>
        <shortName>FALDH</shortName>
        <shortName>FDH</shortName>
        <shortName>GSH-FDH</shortName>
        <ecNumber>1.1.1.-</ecNumber>
    </alternativeName>
    <alternativeName>
        <fullName>S-(hydroxymethyl)glutathione dehydrogenase</fullName>
        <ecNumber evidence="1">1.1.1.284</ecNumber>
    </alternativeName>
</protein>
<reference key="1">
    <citation type="journal article" date="1996" name="Gene">
        <title>Molecular cloning of fish alcohol dehydrogenase cDNA.</title>
        <authorList>
            <person name="Funkenstein B."/>
            <person name="Jakowlew S.B."/>
        </authorList>
    </citation>
    <scope>NUCLEOTIDE SEQUENCE [MRNA]</scope>
    <scope>TISSUE SPECIFICITY</scope>
    <scope>DEVELOPMENTAL STAGE</scope>
    <source>
        <tissue>Larva</tissue>
    </source>
</reference>
<feature type="chain" id="PRO_0000160766" description="Alcohol dehydrogenase class-3">
    <location>
        <begin position="1"/>
        <end position="376"/>
    </location>
</feature>
<feature type="binding site" evidence="1">
    <location>
        <position position="47"/>
    </location>
    <ligand>
        <name>Zn(2+)</name>
        <dbReference type="ChEBI" id="CHEBI:29105"/>
        <label>1</label>
        <note>catalytic</note>
    </ligand>
</feature>
<feature type="binding site" evidence="1">
    <location>
        <position position="69"/>
    </location>
    <ligand>
        <name>Zn(2+)</name>
        <dbReference type="ChEBI" id="CHEBI:29105"/>
        <label>1</label>
        <note>catalytic</note>
    </ligand>
</feature>
<feature type="binding site" evidence="1">
    <location>
        <position position="99"/>
    </location>
    <ligand>
        <name>Zn(2+)</name>
        <dbReference type="ChEBI" id="CHEBI:29105"/>
        <label>2</label>
    </ligand>
</feature>
<feature type="binding site" evidence="1">
    <location>
        <position position="102"/>
    </location>
    <ligand>
        <name>Zn(2+)</name>
        <dbReference type="ChEBI" id="CHEBI:29105"/>
        <label>2</label>
    </ligand>
</feature>
<feature type="binding site" evidence="1">
    <location>
        <position position="105"/>
    </location>
    <ligand>
        <name>Zn(2+)</name>
        <dbReference type="ChEBI" id="CHEBI:29105"/>
        <label>2</label>
    </ligand>
</feature>
<feature type="binding site" evidence="1">
    <location>
        <position position="113"/>
    </location>
    <ligand>
        <name>Zn(2+)</name>
        <dbReference type="ChEBI" id="CHEBI:29105"/>
        <label>2</label>
    </ligand>
</feature>
<feature type="binding site" evidence="1">
    <location>
        <position position="176"/>
    </location>
    <ligand>
        <name>Zn(2+)</name>
        <dbReference type="ChEBI" id="CHEBI:29105"/>
        <label>1</label>
        <note>catalytic</note>
    </ligand>
</feature>
<feature type="site" description="Important for FDH activity and activation by fatty acids" evidence="1">
    <location>
        <position position="117"/>
    </location>
</feature>
<comment type="function">
    <text evidence="1 2">Class-III ADH is remarkably ineffective in oxidizing ethanol, but it readily catalyzes the oxidation of long-chain primary alcohols and the oxidation of S-(hydroxymethyl) glutathione. Also acts as a S-nitroso-glutathione reductase by catalyzing the NADH-dependent reduction of S-nitrosoglutathione, thereby regulating protein S-nitrosylation (By similarity).</text>
</comment>
<comment type="catalytic activity">
    <reaction evidence="1">
        <text>a primary alcohol + NAD(+) = an aldehyde + NADH + H(+)</text>
        <dbReference type="Rhea" id="RHEA:10736"/>
        <dbReference type="ChEBI" id="CHEBI:15378"/>
        <dbReference type="ChEBI" id="CHEBI:15734"/>
        <dbReference type="ChEBI" id="CHEBI:17478"/>
        <dbReference type="ChEBI" id="CHEBI:57540"/>
        <dbReference type="ChEBI" id="CHEBI:57945"/>
        <dbReference type="EC" id="1.1.1.1"/>
    </reaction>
</comment>
<comment type="catalytic activity">
    <reaction evidence="1">
        <text>a secondary alcohol + NAD(+) = a ketone + NADH + H(+)</text>
        <dbReference type="Rhea" id="RHEA:10740"/>
        <dbReference type="ChEBI" id="CHEBI:15378"/>
        <dbReference type="ChEBI" id="CHEBI:17087"/>
        <dbReference type="ChEBI" id="CHEBI:35681"/>
        <dbReference type="ChEBI" id="CHEBI:57540"/>
        <dbReference type="ChEBI" id="CHEBI:57945"/>
        <dbReference type="EC" id="1.1.1.1"/>
    </reaction>
</comment>
<comment type="catalytic activity">
    <reaction evidence="1">
        <text>S-(hydroxymethyl)glutathione + NADP(+) = S-formylglutathione + NADPH + H(+)</text>
        <dbReference type="Rhea" id="RHEA:19981"/>
        <dbReference type="ChEBI" id="CHEBI:15378"/>
        <dbReference type="ChEBI" id="CHEBI:57688"/>
        <dbReference type="ChEBI" id="CHEBI:57783"/>
        <dbReference type="ChEBI" id="CHEBI:58349"/>
        <dbReference type="ChEBI" id="CHEBI:58758"/>
        <dbReference type="EC" id="1.1.1.284"/>
    </reaction>
</comment>
<comment type="catalytic activity">
    <reaction evidence="1">
        <text>S-(hydroxymethyl)glutathione + NAD(+) = S-formylglutathione + NADH + H(+)</text>
        <dbReference type="Rhea" id="RHEA:19985"/>
        <dbReference type="ChEBI" id="CHEBI:15378"/>
        <dbReference type="ChEBI" id="CHEBI:57540"/>
        <dbReference type="ChEBI" id="CHEBI:57688"/>
        <dbReference type="ChEBI" id="CHEBI:57945"/>
        <dbReference type="ChEBI" id="CHEBI:58758"/>
        <dbReference type="EC" id="1.1.1.284"/>
    </reaction>
</comment>
<comment type="catalytic activity">
    <reaction evidence="2">
        <text>S-nitrosoglutathione + NADH + H(+) = S-(hydroxysulfenamide)glutathione + NAD(+)</text>
        <dbReference type="Rhea" id="RHEA:78371"/>
        <dbReference type="ChEBI" id="CHEBI:15378"/>
        <dbReference type="ChEBI" id="CHEBI:57540"/>
        <dbReference type="ChEBI" id="CHEBI:57945"/>
        <dbReference type="ChEBI" id="CHEBI:145544"/>
        <dbReference type="ChEBI" id="CHEBI:229723"/>
    </reaction>
    <physiologicalReaction direction="left-to-right" evidence="2">
        <dbReference type="Rhea" id="RHEA:78372"/>
    </physiologicalReaction>
</comment>
<comment type="cofactor">
    <cofactor evidence="1">
        <name>Zn(2+)</name>
        <dbReference type="ChEBI" id="CHEBI:29105"/>
    </cofactor>
    <text evidence="1">Binds 2 Zn(2+) ions per subunit.</text>
</comment>
<comment type="subunit">
    <text evidence="1">Homodimer.</text>
</comment>
<comment type="subcellular location">
    <subcellularLocation>
        <location evidence="4">Cytoplasm</location>
    </subcellularLocation>
</comment>
<comment type="tissue specificity">
    <text evidence="3">Expressed in the skeletal muscle, heart, gill filaments and liver, with highest levels in the kidney.</text>
</comment>
<comment type="developmental stage">
    <text evidence="3">Found in the eggs and in embryos 4, 8 and 12 hours after fertilization, as well as on all days post-hatching. Level of expression decreases during embryonal development but increases 4-fold from day 1 to day 21 after hatching.</text>
</comment>
<comment type="similarity">
    <text evidence="4">Belongs to the zinc-containing alcohol dehydrogenase family. Class-III subfamily.</text>
</comment>
<keyword id="KW-0963">Cytoplasm</keyword>
<keyword id="KW-0479">Metal-binding</keyword>
<keyword id="KW-0520">NAD</keyword>
<keyword id="KW-0560">Oxidoreductase</keyword>
<keyword id="KW-1185">Reference proteome</keyword>
<keyword id="KW-0862">Zinc</keyword>
<proteinExistence type="evidence at transcript level"/>
<sequence>METAGKVIKCKAAVAWEPGKPLSIEEVEVAPPNAHEVRIKLFATGVCHTDAYTLSGSDPEGLFPVILGHEGAGTVESVGEGVTKFKPGDTVIPLYVPQCGECKFCKNPKTNLCQKIRITQGQGLLPDKTSRFTCKGKQVFHFMGTSTFSEYTVVADISLAKVNEKAPMDKVCLLGCGISTGYGAALNTAKVEPGSTCAVFGLGAVGLAVIMGCKVAGATRIIGIDLNPAKFETAKEFGATEFVNPKDHSKPIQEVLVEMTDGGVDYSFECIGNVQIMRAALEACHKGWGESVIIGVAGAGQEISTRPFQLVTGRVWKGTAFGGWKSVESVPKLVEDYMSKKLKVDEFVTHTLPFEKINEGFELMHAGKSIRTVLTF</sequence>